<dbReference type="EC" id="3.6.1.27" evidence="1"/>
<dbReference type="EMBL" id="CU928164">
    <property type="protein sequence ID" value="CAR19669.1"/>
    <property type="molecule type" value="Genomic_DNA"/>
</dbReference>
<dbReference type="RefSeq" id="YP_002409457.1">
    <property type="nucleotide sequence ID" value="NC_011750.1"/>
</dbReference>
<dbReference type="SMR" id="B7NJS0"/>
<dbReference type="STRING" id="585057.ECIAI39_3553"/>
<dbReference type="KEGG" id="ect:ECIAI39_3553"/>
<dbReference type="PATRIC" id="fig|585057.6.peg.3681"/>
<dbReference type="HOGENOM" id="CLU_060296_2_0_6"/>
<dbReference type="Proteomes" id="UP000000749">
    <property type="component" value="Chromosome"/>
</dbReference>
<dbReference type="GO" id="GO:0005886">
    <property type="term" value="C:plasma membrane"/>
    <property type="evidence" value="ECO:0007669"/>
    <property type="project" value="UniProtKB-SubCell"/>
</dbReference>
<dbReference type="GO" id="GO:0050380">
    <property type="term" value="F:undecaprenyl-diphosphatase activity"/>
    <property type="evidence" value="ECO:0007669"/>
    <property type="project" value="UniProtKB-UniRule"/>
</dbReference>
<dbReference type="GO" id="GO:0071555">
    <property type="term" value="P:cell wall organization"/>
    <property type="evidence" value="ECO:0007669"/>
    <property type="project" value="UniProtKB-KW"/>
</dbReference>
<dbReference type="GO" id="GO:0009252">
    <property type="term" value="P:peptidoglycan biosynthetic process"/>
    <property type="evidence" value="ECO:0007669"/>
    <property type="project" value="UniProtKB-KW"/>
</dbReference>
<dbReference type="GO" id="GO:0008360">
    <property type="term" value="P:regulation of cell shape"/>
    <property type="evidence" value="ECO:0007669"/>
    <property type="project" value="UniProtKB-KW"/>
</dbReference>
<dbReference type="GO" id="GO:0046677">
    <property type="term" value="P:response to antibiotic"/>
    <property type="evidence" value="ECO:0007669"/>
    <property type="project" value="UniProtKB-UniRule"/>
</dbReference>
<dbReference type="HAMAP" id="MF_01006">
    <property type="entry name" value="Undec_diphosphatase"/>
    <property type="match status" value="1"/>
</dbReference>
<dbReference type="InterPro" id="IPR003824">
    <property type="entry name" value="UppP"/>
</dbReference>
<dbReference type="NCBIfam" id="NF001388">
    <property type="entry name" value="PRK00281.1-1"/>
    <property type="match status" value="1"/>
</dbReference>
<dbReference type="NCBIfam" id="NF001389">
    <property type="entry name" value="PRK00281.1-2"/>
    <property type="match status" value="1"/>
</dbReference>
<dbReference type="NCBIfam" id="NF001390">
    <property type="entry name" value="PRK00281.1-4"/>
    <property type="match status" value="1"/>
</dbReference>
<dbReference type="NCBIfam" id="TIGR00753">
    <property type="entry name" value="undec_PP_bacA"/>
    <property type="match status" value="1"/>
</dbReference>
<dbReference type="PANTHER" id="PTHR30622">
    <property type="entry name" value="UNDECAPRENYL-DIPHOSPHATASE"/>
    <property type="match status" value="1"/>
</dbReference>
<dbReference type="PANTHER" id="PTHR30622:SF3">
    <property type="entry name" value="UNDECAPRENYL-DIPHOSPHATASE"/>
    <property type="match status" value="1"/>
</dbReference>
<dbReference type="Pfam" id="PF02673">
    <property type="entry name" value="BacA"/>
    <property type="match status" value="1"/>
</dbReference>
<accession>B7NJS0</accession>
<protein>
    <recommendedName>
        <fullName evidence="1">Undecaprenyl-diphosphatase</fullName>
        <ecNumber evidence="1">3.6.1.27</ecNumber>
    </recommendedName>
    <alternativeName>
        <fullName evidence="1">Bacitracin resistance protein</fullName>
    </alternativeName>
    <alternativeName>
        <fullName evidence="1">Undecaprenyl pyrophosphate phosphatase</fullName>
    </alternativeName>
</protein>
<keyword id="KW-0046">Antibiotic resistance</keyword>
<keyword id="KW-0997">Cell inner membrane</keyword>
<keyword id="KW-1003">Cell membrane</keyword>
<keyword id="KW-0133">Cell shape</keyword>
<keyword id="KW-0961">Cell wall biogenesis/degradation</keyword>
<keyword id="KW-0378">Hydrolase</keyword>
<keyword id="KW-0472">Membrane</keyword>
<keyword id="KW-0573">Peptidoglycan synthesis</keyword>
<keyword id="KW-0812">Transmembrane</keyword>
<keyword id="KW-1133">Transmembrane helix</keyword>
<proteinExistence type="inferred from homology"/>
<reference key="1">
    <citation type="journal article" date="2009" name="PLoS Genet.">
        <title>Organised genome dynamics in the Escherichia coli species results in highly diverse adaptive paths.</title>
        <authorList>
            <person name="Touchon M."/>
            <person name="Hoede C."/>
            <person name="Tenaillon O."/>
            <person name="Barbe V."/>
            <person name="Baeriswyl S."/>
            <person name="Bidet P."/>
            <person name="Bingen E."/>
            <person name="Bonacorsi S."/>
            <person name="Bouchier C."/>
            <person name="Bouvet O."/>
            <person name="Calteau A."/>
            <person name="Chiapello H."/>
            <person name="Clermont O."/>
            <person name="Cruveiller S."/>
            <person name="Danchin A."/>
            <person name="Diard M."/>
            <person name="Dossat C."/>
            <person name="Karoui M.E."/>
            <person name="Frapy E."/>
            <person name="Garry L."/>
            <person name="Ghigo J.M."/>
            <person name="Gilles A.M."/>
            <person name="Johnson J."/>
            <person name="Le Bouguenec C."/>
            <person name="Lescat M."/>
            <person name="Mangenot S."/>
            <person name="Martinez-Jehanne V."/>
            <person name="Matic I."/>
            <person name="Nassif X."/>
            <person name="Oztas S."/>
            <person name="Petit M.A."/>
            <person name="Pichon C."/>
            <person name="Rouy Z."/>
            <person name="Ruf C.S."/>
            <person name="Schneider D."/>
            <person name="Tourret J."/>
            <person name="Vacherie B."/>
            <person name="Vallenet D."/>
            <person name="Medigue C."/>
            <person name="Rocha E.P.C."/>
            <person name="Denamur E."/>
        </authorList>
    </citation>
    <scope>NUCLEOTIDE SEQUENCE [LARGE SCALE GENOMIC DNA]</scope>
    <source>
        <strain>IAI39 / ExPEC</strain>
    </source>
</reference>
<comment type="function">
    <text evidence="1">Catalyzes the dephosphorylation of undecaprenyl diphosphate (UPP). Confers resistance to bacitracin.</text>
</comment>
<comment type="catalytic activity">
    <reaction evidence="1">
        <text>di-trans,octa-cis-undecaprenyl diphosphate + H2O = di-trans,octa-cis-undecaprenyl phosphate + phosphate + H(+)</text>
        <dbReference type="Rhea" id="RHEA:28094"/>
        <dbReference type="ChEBI" id="CHEBI:15377"/>
        <dbReference type="ChEBI" id="CHEBI:15378"/>
        <dbReference type="ChEBI" id="CHEBI:43474"/>
        <dbReference type="ChEBI" id="CHEBI:58405"/>
        <dbReference type="ChEBI" id="CHEBI:60392"/>
        <dbReference type="EC" id="3.6.1.27"/>
    </reaction>
</comment>
<comment type="subcellular location">
    <subcellularLocation>
        <location evidence="1">Cell inner membrane</location>
        <topology evidence="1">Multi-pass membrane protein</topology>
    </subcellularLocation>
</comment>
<comment type="miscellaneous">
    <text>Bacitracin is thought to be involved in the inhibition of peptidoglycan synthesis by sequestering undecaprenyl diphosphate, thereby reducing the pool of lipid carrier available.</text>
</comment>
<comment type="similarity">
    <text evidence="1">Belongs to the UppP family.</text>
</comment>
<evidence type="ECO:0000255" key="1">
    <source>
        <dbReference type="HAMAP-Rule" id="MF_01006"/>
    </source>
</evidence>
<feature type="chain" id="PRO_1000197370" description="Undecaprenyl-diphosphatase">
    <location>
        <begin position="1"/>
        <end position="273"/>
    </location>
</feature>
<feature type="transmembrane region" description="Helical" evidence="1">
    <location>
        <begin position="6"/>
        <end position="26"/>
    </location>
</feature>
<feature type="transmembrane region" description="Helical" evidence="1">
    <location>
        <begin position="45"/>
        <end position="65"/>
    </location>
</feature>
<feature type="transmembrane region" description="Helical" evidence="1">
    <location>
        <begin position="90"/>
        <end position="110"/>
    </location>
</feature>
<feature type="transmembrane region" description="Helical" evidence="1">
    <location>
        <begin position="116"/>
        <end position="136"/>
    </location>
</feature>
<feature type="transmembrane region" description="Helical" evidence="1">
    <location>
        <begin position="190"/>
        <end position="210"/>
    </location>
</feature>
<feature type="transmembrane region" description="Helical" evidence="1">
    <location>
        <begin position="222"/>
        <end position="242"/>
    </location>
</feature>
<feature type="transmembrane region" description="Helical" evidence="1">
    <location>
        <begin position="252"/>
        <end position="272"/>
    </location>
</feature>
<organism>
    <name type="scientific">Escherichia coli O7:K1 (strain IAI39 / ExPEC)</name>
    <dbReference type="NCBI Taxonomy" id="585057"/>
    <lineage>
        <taxon>Bacteria</taxon>
        <taxon>Pseudomonadati</taxon>
        <taxon>Pseudomonadota</taxon>
        <taxon>Gammaproteobacteria</taxon>
        <taxon>Enterobacterales</taxon>
        <taxon>Enterobacteriaceae</taxon>
        <taxon>Escherichia</taxon>
    </lineage>
</organism>
<gene>
    <name evidence="1" type="primary">uppP</name>
    <name type="ordered locus">ECIAI39_3553</name>
</gene>
<sequence>MSDMHSLLIAAILGVVEGLTEFLPVSSTGHMIIVGHLLGFEGDTAKTFEVVIQLGSILAVVVMFWRRLFGLIGIHFGRPLQHEGESKGRLTLIHILLGMIPAVVLGLLFHDTIKSLFNPINVMYALVVGGLLLIAAECLKPKEPRAPGLDDMTYRQAFMIGCFQCLALWPGFSRSGATISGGMLMGVSRYAASEFSFLLAVPMMMGATALDLYKSWGFLTNGDIPMFAVGFITAFVVALIAIKTFLQLIKRISFIPFAIYRFIVAAAVYVVFF</sequence>
<name>UPPP_ECO7I</name>